<name>TRPV4_CHICK</name>
<comment type="function">
    <text evidence="3 7 8">Non-selective calcium permeant cation channel involved in osmotic sensitivity and mechanosensitivity (PubMed:11081638, PubMed:19864432). Activation by exposure to hypotonicity within the physiological range exhibits an outward rectification (PubMed:11081638). Also activated by phorbol esters (PubMed:19864432). Channel activity seems to be regulated by a calmodulin-dependent mechanism (By similarity).</text>
</comment>
<comment type="catalytic activity">
    <reaction evidence="7 8">
        <text>Ca(2+)(in) = Ca(2+)(out)</text>
        <dbReference type="Rhea" id="RHEA:29671"/>
        <dbReference type="ChEBI" id="CHEBI:29108"/>
    </reaction>
</comment>
<comment type="activity regulation">
    <text evidence="8">ATP binding enhances channel sensitivity to agonists. Ca(2+)-calmodulin prevents the ATP-mediated increased sensitivity to agonists.</text>
</comment>
<comment type="subunit">
    <text evidence="3 8">Homotetramer (By similarity). Interacts with Ca(2+)-calmodulin (PubMed:19864432).</text>
</comment>
<comment type="subcellular location">
    <subcellularLocation>
        <location evidence="12 13">Apical cell membrane</location>
        <topology evidence="2">Multi-pass membrane protein</topology>
    </subcellularLocation>
    <subcellularLocation>
        <location evidence="2">Cell junction</location>
        <location evidence="2">Adherens junction</location>
    </subcellularLocation>
</comment>
<comment type="domain">
    <text evidence="8 9">The ANK repeat region mediates interaction with Ca(2+)-calmodulin and ATP binding (PubMed:19864432). The ANK repeat region mediates interaction with phosphatidylinositol-4,5-bisphosphate and related phosphatidylinositides (PubMed:25256292).</text>
</comment>
<comment type="similarity">
    <text evidence="11">Belongs to the transient receptor (TC 1.A.4) family. TrpV subfamily. TRPV4 sub-subfamily.</text>
</comment>
<proteinExistence type="evidence at protein level"/>
<organism evidence="16">
    <name type="scientific">Gallus gallus</name>
    <name type="common">Chicken</name>
    <dbReference type="NCBI Taxonomy" id="9031"/>
    <lineage>
        <taxon>Eukaryota</taxon>
        <taxon>Metazoa</taxon>
        <taxon>Chordata</taxon>
        <taxon>Craniata</taxon>
        <taxon>Vertebrata</taxon>
        <taxon>Euteleostomi</taxon>
        <taxon>Archelosauria</taxon>
        <taxon>Archosauria</taxon>
        <taxon>Dinosauria</taxon>
        <taxon>Saurischia</taxon>
        <taxon>Theropoda</taxon>
        <taxon>Coelurosauria</taxon>
        <taxon>Aves</taxon>
        <taxon>Neognathae</taxon>
        <taxon>Galloanserae</taxon>
        <taxon>Galliformes</taxon>
        <taxon>Phasianidae</taxon>
        <taxon>Phasianinae</taxon>
        <taxon>Gallus</taxon>
    </lineage>
</organism>
<keyword id="KW-0002">3D-structure</keyword>
<keyword id="KW-0040">ANK repeat</keyword>
<keyword id="KW-0067">ATP-binding</keyword>
<keyword id="KW-0106">Calcium</keyword>
<keyword id="KW-0107">Calcium channel</keyword>
<keyword id="KW-0109">Calcium transport</keyword>
<keyword id="KW-0112">Calmodulin-binding</keyword>
<keyword id="KW-0965">Cell junction</keyword>
<keyword id="KW-1003">Cell membrane</keyword>
<keyword id="KW-0407">Ion channel</keyword>
<keyword id="KW-0406">Ion transport</keyword>
<keyword id="KW-0446">Lipid-binding</keyword>
<keyword id="KW-0472">Membrane</keyword>
<keyword id="KW-0479">Metal-binding</keyword>
<keyword id="KW-0547">Nucleotide-binding</keyword>
<keyword id="KW-1185">Reference proteome</keyword>
<keyword id="KW-0677">Repeat</keyword>
<keyword id="KW-0812">Transmembrane</keyword>
<keyword id="KW-1133">Transmembrane helix</keyword>
<keyword id="KW-0813">Transport</keyword>
<dbReference type="EMBL" id="AF261883">
    <property type="protein sequence ID" value="AAG28026.1"/>
    <property type="molecule type" value="mRNA"/>
</dbReference>
<dbReference type="EMBL" id="AADN04000193">
    <property type="status" value="NOT_ANNOTATED_CDS"/>
    <property type="molecule type" value="Genomic_DNA"/>
</dbReference>
<dbReference type="RefSeq" id="NP_990023.1">
    <property type="nucleotide sequence ID" value="NM_204692.1"/>
</dbReference>
<dbReference type="PDB" id="3JXI">
    <property type="method" value="X-ray"/>
    <property type="resolution" value="2.30 A"/>
    <property type="chains" value="A/B/C/D=133-382"/>
</dbReference>
<dbReference type="PDB" id="3JXJ">
    <property type="method" value="X-ray"/>
    <property type="resolution" value="2.80 A"/>
    <property type="chains" value="A/B=133-382"/>
</dbReference>
<dbReference type="PDB" id="3W9F">
    <property type="method" value="X-ray"/>
    <property type="resolution" value="1.90 A"/>
    <property type="chains" value="A/B/C/D=133-382"/>
</dbReference>
<dbReference type="PDB" id="3W9G">
    <property type="method" value="X-ray"/>
    <property type="resolution" value="2.00 A"/>
    <property type="chains" value="A/B/C/D=133-382"/>
</dbReference>
<dbReference type="PDB" id="6F55">
    <property type="method" value="NMR"/>
    <property type="chains" value="B=121-135"/>
</dbReference>
<dbReference type="PDBsum" id="3JXI"/>
<dbReference type="PDBsum" id="3JXJ"/>
<dbReference type="PDBsum" id="3W9F"/>
<dbReference type="PDBsum" id="3W9G"/>
<dbReference type="PDBsum" id="6F55"/>
<dbReference type="SASBDB" id="A0A1D5PXA5"/>
<dbReference type="SMR" id="A0A1D5PXA5"/>
<dbReference type="PaxDb" id="9031-ENSGALP00000008256"/>
<dbReference type="GeneID" id="395427"/>
<dbReference type="KEGG" id="gga:395427"/>
<dbReference type="CTD" id="59341"/>
<dbReference type="VEuPathDB" id="HostDB:geneid_395427"/>
<dbReference type="eggNOG" id="KOG3676">
    <property type="taxonomic scope" value="Eukaryota"/>
</dbReference>
<dbReference type="InParanoid" id="A0A1D5PXA5"/>
<dbReference type="OrthoDB" id="533508at2759"/>
<dbReference type="EvolutionaryTrace" id="A0A1D5PXA5"/>
<dbReference type="PRO" id="PR:A0A1D5PXA5"/>
<dbReference type="Proteomes" id="UP000000539">
    <property type="component" value="Unassembled WGS sequence"/>
</dbReference>
<dbReference type="GO" id="GO:0005912">
    <property type="term" value="C:adherens junction"/>
    <property type="evidence" value="ECO:0007669"/>
    <property type="project" value="UniProtKB-SubCell"/>
</dbReference>
<dbReference type="GO" id="GO:0016324">
    <property type="term" value="C:apical plasma membrane"/>
    <property type="evidence" value="ECO:0007669"/>
    <property type="project" value="UniProtKB-SubCell"/>
</dbReference>
<dbReference type="GO" id="GO:0005929">
    <property type="term" value="C:cilium"/>
    <property type="evidence" value="ECO:0000318"/>
    <property type="project" value="GO_Central"/>
</dbReference>
<dbReference type="GO" id="GO:0005886">
    <property type="term" value="C:plasma membrane"/>
    <property type="evidence" value="ECO:0000250"/>
    <property type="project" value="UniProtKB"/>
</dbReference>
<dbReference type="GO" id="GO:0005524">
    <property type="term" value="F:ATP binding"/>
    <property type="evidence" value="ECO:0007669"/>
    <property type="project" value="UniProtKB-KW"/>
</dbReference>
<dbReference type="GO" id="GO:0005262">
    <property type="term" value="F:calcium channel activity"/>
    <property type="evidence" value="ECO:0000250"/>
    <property type="project" value="UniProtKB"/>
</dbReference>
<dbReference type="GO" id="GO:0005516">
    <property type="term" value="F:calmodulin binding"/>
    <property type="evidence" value="ECO:0000250"/>
    <property type="project" value="UniProtKB"/>
</dbReference>
<dbReference type="GO" id="GO:0008289">
    <property type="term" value="F:lipid binding"/>
    <property type="evidence" value="ECO:0000353"/>
    <property type="project" value="DisProt"/>
</dbReference>
<dbReference type="GO" id="GO:0046872">
    <property type="term" value="F:metal ion binding"/>
    <property type="evidence" value="ECO:0007669"/>
    <property type="project" value="UniProtKB-KW"/>
</dbReference>
<dbReference type="GO" id="GO:0005261">
    <property type="term" value="F:monoatomic cation channel activity"/>
    <property type="evidence" value="ECO:0000250"/>
    <property type="project" value="UniProtKB"/>
</dbReference>
<dbReference type="GO" id="GO:0035091">
    <property type="term" value="F:phosphatidylinositol binding"/>
    <property type="evidence" value="ECO:0000269"/>
    <property type="project" value="DisProt"/>
</dbReference>
<dbReference type="GO" id="GO:0017124">
    <property type="term" value="F:SH3 domain binding"/>
    <property type="evidence" value="ECO:0000269"/>
    <property type="project" value="DisProt"/>
</dbReference>
<dbReference type="GO" id="GO:0007015">
    <property type="term" value="P:actin filament organization"/>
    <property type="evidence" value="ECO:0000318"/>
    <property type="project" value="GO_Central"/>
</dbReference>
<dbReference type="GO" id="GO:0098703">
    <property type="term" value="P:calcium ion import across plasma membrane"/>
    <property type="evidence" value="ECO:0000318"/>
    <property type="project" value="GO_Central"/>
</dbReference>
<dbReference type="GO" id="GO:0006874">
    <property type="term" value="P:intracellular calcium ion homeostasis"/>
    <property type="evidence" value="ECO:0000250"/>
    <property type="project" value="UniProtKB"/>
</dbReference>
<dbReference type="GO" id="GO:0007231">
    <property type="term" value="P:osmosensory signaling pathway"/>
    <property type="evidence" value="ECO:0000318"/>
    <property type="project" value="GO_Central"/>
</dbReference>
<dbReference type="CDD" id="cd22195">
    <property type="entry name" value="TRPV4"/>
    <property type="match status" value="1"/>
</dbReference>
<dbReference type="FunFam" id="1.10.287.70:FF:000074">
    <property type="entry name" value="Transient receptor potential cation channel subfamily V member 1"/>
    <property type="match status" value="1"/>
</dbReference>
<dbReference type="FunFam" id="1.25.40.20:FF:000018">
    <property type="entry name" value="Transient receptor potential cation channel subfamily V member 1"/>
    <property type="match status" value="1"/>
</dbReference>
<dbReference type="Gene3D" id="1.10.287.70">
    <property type="match status" value="1"/>
</dbReference>
<dbReference type="Gene3D" id="1.25.40.20">
    <property type="entry name" value="Ankyrin repeat-containing domain"/>
    <property type="match status" value="1"/>
</dbReference>
<dbReference type="InterPro" id="IPR002110">
    <property type="entry name" value="Ankyrin_rpt"/>
</dbReference>
<dbReference type="InterPro" id="IPR036770">
    <property type="entry name" value="Ankyrin_rpt-contain_sf"/>
</dbReference>
<dbReference type="InterPro" id="IPR005821">
    <property type="entry name" value="Ion_trans_dom"/>
</dbReference>
<dbReference type="InterPro" id="IPR024862">
    <property type="entry name" value="TRPV"/>
</dbReference>
<dbReference type="InterPro" id="IPR008347">
    <property type="entry name" value="TrpV1-4"/>
</dbReference>
<dbReference type="InterPro" id="IPR008348">
    <property type="entry name" value="TrpV4"/>
</dbReference>
<dbReference type="NCBIfam" id="TIGR00870">
    <property type="entry name" value="trp"/>
    <property type="match status" value="1"/>
</dbReference>
<dbReference type="PANTHER" id="PTHR10582:SF4">
    <property type="entry name" value="TRANSIENT RECEPTOR POTENTIAL CATION CHANNEL SUBFAMILY V MEMBER 4"/>
    <property type="match status" value="1"/>
</dbReference>
<dbReference type="PANTHER" id="PTHR10582">
    <property type="entry name" value="TRANSIENT RECEPTOR POTENTIAL ION CHANNEL PROTEIN"/>
    <property type="match status" value="1"/>
</dbReference>
<dbReference type="Pfam" id="PF00023">
    <property type="entry name" value="Ank"/>
    <property type="match status" value="1"/>
</dbReference>
<dbReference type="Pfam" id="PF00520">
    <property type="entry name" value="Ion_trans"/>
    <property type="match status" value="1"/>
</dbReference>
<dbReference type="PRINTS" id="PR01768">
    <property type="entry name" value="TRPVRECEPTOR"/>
</dbReference>
<dbReference type="PRINTS" id="PR01769">
    <property type="entry name" value="VRL2RECEPTOR"/>
</dbReference>
<dbReference type="SMART" id="SM00248">
    <property type="entry name" value="ANK"/>
    <property type="match status" value="3"/>
</dbReference>
<dbReference type="SUPFAM" id="SSF48403">
    <property type="entry name" value="Ankyrin repeat"/>
    <property type="match status" value="1"/>
</dbReference>
<dbReference type="PROSITE" id="PS50297">
    <property type="entry name" value="ANK_REP_REGION"/>
    <property type="match status" value="1"/>
</dbReference>
<dbReference type="PROSITE" id="PS50088">
    <property type="entry name" value="ANK_REPEAT"/>
    <property type="match status" value="1"/>
</dbReference>
<feature type="chain" id="PRO_0000443481" description="Transient receptor potential cation channel subfamily V member 4">
    <location>
        <begin position="1"/>
        <end position="852"/>
    </location>
</feature>
<feature type="topological domain" description="Cytoplasmic" evidence="1">
    <location>
        <begin position="1"/>
        <end position="455"/>
    </location>
</feature>
<feature type="transmembrane region" description="Helical" evidence="1">
    <location>
        <begin position="456"/>
        <end position="476"/>
    </location>
</feature>
<feature type="topological domain" description="Extracellular" evidence="1">
    <location>
        <begin position="477"/>
        <end position="493"/>
    </location>
</feature>
<feature type="transmembrane region" description="Helical" evidence="1">
    <location>
        <begin position="494"/>
        <end position="520"/>
    </location>
</feature>
<feature type="topological domain" description="Cytoplasmic" evidence="1">
    <location>
        <begin position="521"/>
        <end position="533"/>
    </location>
</feature>
<feature type="transmembrane region" description="Helical" evidence="1">
    <location>
        <begin position="534"/>
        <end position="554"/>
    </location>
</feature>
<feature type="topological domain" description="Extracellular" evidence="1">
    <location>
        <begin position="555"/>
        <end position="558"/>
    </location>
</feature>
<feature type="transmembrane region" description="Helical" evidence="1">
    <location>
        <begin position="559"/>
        <end position="579"/>
    </location>
</feature>
<feature type="topological domain" description="Cytoplasmic" evidence="1">
    <location>
        <begin position="580"/>
        <end position="594"/>
    </location>
</feature>
<feature type="transmembrane region" description="Helical" evidence="1">
    <location>
        <begin position="595"/>
        <end position="622"/>
    </location>
</feature>
<feature type="topological domain" description="Extracellular" evidence="1">
    <location>
        <begin position="623"/>
        <end position="651"/>
    </location>
</feature>
<feature type="intramembrane region" description="Pore-forming" evidence="1">
    <location>
        <begin position="652"/>
        <end position="671"/>
    </location>
</feature>
<feature type="topological domain" description="Extracellular" evidence="1">
    <location>
        <begin position="672"/>
        <end position="679"/>
    </location>
</feature>
<feature type="transmembrane region" description="Helical" evidence="1">
    <location>
        <begin position="680"/>
        <end position="708"/>
    </location>
</feature>
<feature type="topological domain" description="Cytoplasmic" evidence="1">
    <location>
        <begin position="709"/>
        <end position="852"/>
    </location>
</feature>
<feature type="repeat" description="ANK 1" evidence="5">
    <location>
        <begin position="223"/>
        <end position="252"/>
    </location>
</feature>
<feature type="repeat" description="ANK 2" evidence="5">
    <location>
        <begin position="270"/>
        <end position="299"/>
    </location>
</feature>
<feature type="repeat" description="ANK 3" evidence="5">
    <location>
        <begin position="355"/>
        <end position="387"/>
    </location>
</feature>
<feature type="region of interest" description="Disordered" evidence="6">
    <location>
        <begin position="30"/>
        <end position="51"/>
    </location>
</feature>
<feature type="short sequence motif" description="Selectivity filter" evidence="1">
    <location>
        <begin position="665"/>
        <end position="668"/>
    </location>
</feature>
<feature type="binding site" evidence="3">
    <location>
        <position position="178"/>
    </location>
    <ligand>
        <name>ATP</name>
        <dbReference type="ChEBI" id="CHEBI:30616"/>
    </ligand>
</feature>
<feature type="binding site" evidence="3">
    <location>
        <position position="183"/>
    </location>
    <ligand>
        <name>ATP</name>
        <dbReference type="ChEBI" id="CHEBI:30616"/>
    </ligand>
</feature>
<feature type="binding site" evidence="3">
    <location>
        <position position="187"/>
    </location>
    <ligand>
        <name>ATP</name>
        <dbReference type="ChEBI" id="CHEBI:30616"/>
    </ligand>
</feature>
<feature type="binding site" evidence="3">
    <location>
        <begin position="222"/>
        <end position="225"/>
    </location>
    <ligand>
        <name>ATP</name>
        <dbReference type="ChEBI" id="CHEBI:30616"/>
    </ligand>
</feature>
<feature type="binding site" evidence="3">
    <location>
        <position position="234"/>
    </location>
    <ligand>
        <name>ATP</name>
        <dbReference type="ChEBI" id="CHEBI:30616"/>
    </ligand>
</feature>
<feature type="binding site" evidence="14 19">
    <location>
        <begin position="235"/>
        <end position="237"/>
    </location>
    <ligand>
        <name>a 1,2-diacyl-sn-glycero-3-phospho-(1D-myo-inositol-4,5-bisphosphate)</name>
        <dbReference type="ChEBI" id="CHEBI:58456"/>
    </ligand>
</feature>
<feature type="binding site" evidence="14 19">
    <location>
        <begin position="282"/>
        <end position="285"/>
    </location>
    <ligand>
        <name>a 1,2-diacyl-sn-glycero-3-phospho-(1D-myo-inositol-4,5-bisphosphate)</name>
        <dbReference type="ChEBI" id="CHEBI:58456"/>
    </ligand>
</feature>
<feature type="binding site" evidence="14 19">
    <location>
        <position position="330"/>
    </location>
    <ligand>
        <name>a 1,2-diacyl-sn-glycero-3-phospho-(1D-myo-inositol-4,5-bisphosphate)</name>
        <dbReference type="ChEBI" id="CHEBI:58456"/>
    </ligand>
</feature>
<feature type="binding site" evidence="4">
    <location>
        <position position="668"/>
    </location>
    <ligand>
        <name>Ca(2+)</name>
        <dbReference type="ChEBI" id="CHEBI:29108"/>
        <note>ligand shared between two neighboring subunits</note>
    </ligand>
</feature>
<feature type="mutagenesis site" description="Strongly decreased affinity for ATP and Ca(2+)-calmodulin. Abolishes ATP-mediated increase in channel sensitivity to agonists." evidence="8">
    <original>K</original>
    <variation>A</variation>
    <location>
        <position position="178"/>
    </location>
</feature>
<feature type="mutagenesis site" description="Strongly decreased affinity for ATP and slightly decreased affinity for Ca(2+)-calmodulin." evidence="8">
    <original>K</original>
    <variation>A</variation>
    <location>
        <position position="183"/>
    </location>
</feature>
<feature type="mutagenesis site" description="No significant effect on affinity for ATP and Ca(2+)-calmodulin." evidence="8">
    <original>K</original>
    <variation>A</variation>
    <location>
        <position position="205"/>
    </location>
</feature>
<feature type="sequence conflict" description="In Ref. 1; AAG28026." evidence="11" ref="1">
    <original>V</original>
    <variation>G</variation>
    <location>
        <position position="47"/>
    </location>
</feature>
<feature type="sequence conflict" description="In Ref. 1; AAG28026." evidence="11" ref="1">
    <original>I</original>
    <variation>V</variation>
    <location>
        <position position="131"/>
    </location>
</feature>
<feature type="sequence conflict" description="In Ref. 1; AAG28026." evidence="11" ref="1">
    <original>V</original>
    <variation>A</variation>
    <location>
        <position position="741"/>
    </location>
</feature>
<feature type="strand" evidence="23">
    <location>
        <begin position="131"/>
        <end position="133"/>
    </location>
</feature>
<feature type="helix" evidence="22">
    <location>
        <begin position="137"/>
        <end position="146"/>
    </location>
</feature>
<feature type="helix" evidence="22">
    <location>
        <begin position="149"/>
        <end position="152"/>
    </location>
</feature>
<feature type="helix" evidence="22">
    <location>
        <begin position="155"/>
        <end position="161"/>
    </location>
</feature>
<feature type="helix" evidence="22">
    <location>
        <begin position="169"/>
        <end position="171"/>
    </location>
</feature>
<feature type="turn" evidence="22">
    <location>
        <begin position="174"/>
        <end position="176"/>
    </location>
</feature>
<feature type="helix" evidence="22">
    <location>
        <begin position="180"/>
        <end position="185"/>
    </location>
</feature>
<feature type="strand" evidence="21">
    <location>
        <begin position="189"/>
        <end position="191"/>
    </location>
</feature>
<feature type="helix" evidence="22">
    <location>
        <begin position="195"/>
        <end position="205"/>
    </location>
</feature>
<feature type="helix" evidence="22">
    <location>
        <begin position="209"/>
        <end position="214"/>
    </location>
</feature>
<feature type="strand" evidence="22">
    <location>
        <begin position="220"/>
        <end position="225"/>
    </location>
</feature>
<feature type="helix" evidence="22">
    <location>
        <begin position="227"/>
        <end position="233"/>
    </location>
</feature>
<feature type="helix" evidence="22">
    <location>
        <begin position="237"/>
        <end position="245"/>
    </location>
</feature>
<feature type="strand" evidence="22">
    <location>
        <begin position="260"/>
        <end position="262"/>
    </location>
</feature>
<feature type="helix" evidence="22">
    <location>
        <begin position="274"/>
        <end position="280"/>
    </location>
</feature>
<feature type="helix" evidence="22">
    <location>
        <begin position="284"/>
        <end position="292"/>
    </location>
</feature>
<feature type="helix" evidence="22">
    <location>
        <begin position="310"/>
        <end position="317"/>
    </location>
</feature>
<feature type="helix" evidence="22">
    <location>
        <begin position="322"/>
        <end position="342"/>
    </location>
</feature>
<feature type="helix" evidence="22">
    <location>
        <begin position="348"/>
        <end position="350"/>
    </location>
</feature>
<feature type="helix" evidence="22">
    <location>
        <begin position="359"/>
        <end position="365"/>
    </location>
</feature>
<feature type="helix" evidence="22">
    <location>
        <begin position="369"/>
        <end position="382"/>
    </location>
</feature>
<evidence type="ECO:0000250" key="1">
    <source>
        <dbReference type="UniProtKB" id="O35433"/>
    </source>
</evidence>
<evidence type="ECO:0000250" key="2">
    <source>
        <dbReference type="UniProtKB" id="Q9EPK8"/>
    </source>
</evidence>
<evidence type="ECO:0000250" key="3">
    <source>
        <dbReference type="UniProtKB" id="Q9HBA0"/>
    </source>
</evidence>
<evidence type="ECO:0000250" key="4">
    <source>
        <dbReference type="UniProtKB" id="Q9R186"/>
    </source>
</evidence>
<evidence type="ECO:0000255" key="5"/>
<evidence type="ECO:0000256" key="6">
    <source>
        <dbReference type="SAM" id="MobiDB-lite"/>
    </source>
</evidence>
<evidence type="ECO:0000269" key="7">
    <source>
    </source>
</evidence>
<evidence type="ECO:0000269" key="8">
    <source>
    </source>
</evidence>
<evidence type="ECO:0000269" key="9">
    <source>
    </source>
</evidence>
<evidence type="ECO:0000303" key="10">
    <source>
    </source>
</evidence>
<evidence type="ECO:0000305" key="11"/>
<evidence type="ECO:0000305" key="12">
    <source>
    </source>
</evidence>
<evidence type="ECO:0000305" key="13">
    <source>
    </source>
</evidence>
<evidence type="ECO:0000305" key="14">
    <source>
    </source>
</evidence>
<evidence type="ECO:0000312" key="15">
    <source>
        <dbReference type="EMBL" id="AAG28026.1"/>
    </source>
</evidence>
<evidence type="ECO:0000312" key="16">
    <source>
        <dbReference type="Proteomes" id="UP000000539"/>
    </source>
</evidence>
<evidence type="ECO:0007744" key="17">
    <source>
        <dbReference type="PDB" id="3JXI"/>
    </source>
</evidence>
<evidence type="ECO:0007744" key="18">
    <source>
        <dbReference type="PDB" id="3JXJ"/>
    </source>
</evidence>
<evidence type="ECO:0007744" key="19">
    <source>
        <dbReference type="PDB" id="3W9F"/>
    </source>
</evidence>
<evidence type="ECO:0007744" key="20">
    <source>
        <dbReference type="PDB" id="3W9G"/>
    </source>
</evidence>
<evidence type="ECO:0007829" key="21">
    <source>
        <dbReference type="PDB" id="3JXJ"/>
    </source>
</evidence>
<evidence type="ECO:0007829" key="22">
    <source>
        <dbReference type="PDB" id="3W9F"/>
    </source>
</evidence>
<evidence type="ECO:0007829" key="23">
    <source>
        <dbReference type="PDB" id="6F55"/>
    </source>
</evidence>
<sequence length="852" mass="96282">MADPEDPRDAGDVLGDDSFPLSSLANLFEVEDTPSPAEPSRGPPGAVDGKQNLRMKFHGAFRKGPPKPMELLESTIYESSVVPAPKKAPMDSLFDYGTYRQHPSENKRWRRRVVEKPVAGTKGPAPNPPPILKVFNRPILFDIVSRGSPDGLEGLLSFLLTHKKRLTDEEFREPSTGKTCLPKALLNLSAGRNDTIPILLDIAEKTGNMREFINSPFRDVYYRGQTALHIAIERRCKHYVELLVEKGADVHAQARGRFFQPKDEGGYFYFGELPLSLAACTNQPHIVHYLTENGHKQADLRRQDSRGNTVLHALVAIADNTRENTKFVTKMYDLLLIKCAKLFPDTNLEALLNNDGLSPLMMAAKTGKIGIFQHIIRREIADEDVRHLSRKFKDWAYGPVYSSLYDLSSLDTCGEEVSVLEILVYNSKIENRHEMLAVEPINELLRDKWRKFGAVSFYISVVSYLCAMIIFTLIAYYRPMEGPPPYPYTTTIDYLRLAGEIITLLTGILFFFSNIKDLFMKKCPGVNSFFIDGSFQLLYFIYSVLVIVTAGLYLGGVEAYLAVMVFALVLGWMNALYFTRGLKLTGTYSIMIQKILFKDLFRFLLVYLLFMIGYASALVSLLNPCPSSESCSEDHSNCTLPTYPSCRDSQTFSTFLLDLFKLTIGMGDLEMLESAKYPGVFIILLVTYIILTFVLLLNMLIALMGETVGQVSKESKHIWKLQWATTILDIERSFPLFLRRVFRSGEMVTVGKGTDGTPDRRWCFRVDEVNWSHWNQNLGIISEDPGKSDTYQYYGFSHTVGRLRRDRWSTVVPRVVELNKSCPTEDVVVPLGTMGTAEARERRHGQTPSSPL</sequence>
<reference evidence="15" key="1">
    <citation type="journal article" date="2000" name="Cell">
        <title>Vanilloid receptor-related osmotically activated channel (VR-OAC), a candidate vertebrate osmoreceptor.</title>
        <authorList>
            <person name="Liedtke W.B."/>
            <person name="Choe Y."/>
            <person name="Marti-Renom M.A."/>
            <person name="Bell A.M."/>
            <person name="Denis C.S."/>
            <person name="Sali A."/>
            <person name="Hudspeth A.J."/>
            <person name="Friedman J.M."/>
            <person name="Heller S."/>
        </authorList>
    </citation>
    <scope>NUCLEOTIDE SEQUENCE [MRNA]</scope>
    <scope>FUNCTION</scope>
    <scope>TRANSPORTER ACTIVITY</scope>
    <scope>SUBCELLULAR LOCATION</scope>
    <source>
        <tissue evidence="15">Cochlea</tissue>
    </source>
</reference>
<reference key="2">
    <citation type="journal article" date="2004" name="Nature">
        <title>Sequence and comparative analysis of the chicken genome provide unique perspectives on vertebrate evolution.</title>
        <authorList>
            <person name="Hillier L.W."/>
            <person name="Miller W."/>
            <person name="Birney E."/>
            <person name="Warren W."/>
            <person name="Hardison R.C."/>
            <person name="Ponting C.P."/>
            <person name="Bork P."/>
            <person name="Burt D.W."/>
            <person name="Groenen M.A.M."/>
            <person name="Delany M.E."/>
            <person name="Dodgson J.B."/>
            <person name="Chinwalla A.T."/>
            <person name="Cliften P.F."/>
            <person name="Clifton S.W."/>
            <person name="Delehaunty K.D."/>
            <person name="Fronick C."/>
            <person name="Fulton R.S."/>
            <person name="Graves T.A."/>
            <person name="Kremitzki C."/>
            <person name="Layman D."/>
            <person name="Magrini V."/>
            <person name="McPherson J.D."/>
            <person name="Miner T.L."/>
            <person name="Minx P."/>
            <person name="Nash W.E."/>
            <person name="Nhan M.N."/>
            <person name="Nelson J.O."/>
            <person name="Oddy L.G."/>
            <person name="Pohl C.S."/>
            <person name="Randall-Maher J."/>
            <person name="Smith S.M."/>
            <person name="Wallis J.W."/>
            <person name="Yang S.-P."/>
            <person name="Romanov M.N."/>
            <person name="Rondelli C.M."/>
            <person name="Paton B."/>
            <person name="Smith J."/>
            <person name="Morrice D."/>
            <person name="Daniels L."/>
            <person name="Tempest H.G."/>
            <person name="Robertson L."/>
            <person name="Masabanda J.S."/>
            <person name="Griffin D.K."/>
            <person name="Vignal A."/>
            <person name="Fillon V."/>
            <person name="Jacobbson L."/>
            <person name="Kerje S."/>
            <person name="Andersson L."/>
            <person name="Crooijmans R.P."/>
            <person name="Aerts J."/>
            <person name="van der Poel J.J."/>
            <person name="Ellegren H."/>
            <person name="Caldwell R.B."/>
            <person name="Hubbard S.J."/>
            <person name="Grafham D.V."/>
            <person name="Kierzek A.M."/>
            <person name="McLaren S.R."/>
            <person name="Overton I.M."/>
            <person name="Arakawa H."/>
            <person name="Beattie K.J."/>
            <person name="Bezzubov Y."/>
            <person name="Boardman P.E."/>
            <person name="Bonfield J.K."/>
            <person name="Croning M.D.R."/>
            <person name="Davies R.M."/>
            <person name="Francis M.D."/>
            <person name="Humphray S.J."/>
            <person name="Scott C.E."/>
            <person name="Taylor R.G."/>
            <person name="Tickle C."/>
            <person name="Brown W.R.A."/>
            <person name="Rogers J."/>
            <person name="Buerstedde J.-M."/>
            <person name="Wilson S.A."/>
            <person name="Stubbs L."/>
            <person name="Ovcharenko I."/>
            <person name="Gordon L."/>
            <person name="Lucas S."/>
            <person name="Miller M.M."/>
            <person name="Inoko H."/>
            <person name="Shiina T."/>
            <person name="Kaufman J."/>
            <person name="Salomonsen J."/>
            <person name="Skjoedt K."/>
            <person name="Wong G.K.-S."/>
            <person name="Wang J."/>
            <person name="Liu B."/>
            <person name="Wang J."/>
            <person name="Yu J."/>
            <person name="Yang H."/>
            <person name="Nefedov M."/>
            <person name="Koriabine M."/>
            <person name="Dejong P.J."/>
            <person name="Goodstadt L."/>
            <person name="Webber C."/>
            <person name="Dickens N.J."/>
            <person name="Letunic I."/>
            <person name="Suyama M."/>
            <person name="Torrents D."/>
            <person name="von Mering C."/>
            <person name="Zdobnov E.M."/>
            <person name="Makova K."/>
            <person name="Nekrutenko A."/>
            <person name="Elnitski L."/>
            <person name="Eswara P."/>
            <person name="King D.C."/>
            <person name="Yang S.-P."/>
            <person name="Tyekucheva S."/>
            <person name="Radakrishnan A."/>
            <person name="Harris R.S."/>
            <person name="Chiaromonte F."/>
            <person name="Taylor J."/>
            <person name="He J."/>
            <person name="Rijnkels M."/>
            <person name="Griffiths-Jones S."/>
            <person name="Ureta-Vidal A."/>
            <person name="Hoffman M.M."/>
            <person name="Severin J."/>
            <person name="Searle S.M.J."/>
            <person name="Law A.S."/>
            <person name="Speed D."/>
            <person name="Waddington D."/>
            <person name="Cheng Z."/>
            <person name="Tuzun E."/>
            <person name="Eichler E."/>
            <person name="Bao Z."/>
            <person name="Flicek P."/>
            <person name="Shteynberg D.D."/>
            <person name="Brent M.R."/>
            <person name="Bye J.M."/>
            <person name="Huckle E.J."/>
            <person name="Chatterji S."/>
            <person name="Dewey C."/>
            <person name="Pachter L."/>
            <person name="Kouranov A."/>
            <person name="Mourelatos Z."/>
            <person name="Hatzigeorgiou A.G."/>
            <person name="Paterson A.H."/>
            <person name="Ivarie R."/>
            <person name="Brandstrom M."/>
            <person name="Axelsson E."/>
            <person name="Backstrom N."/>
            <person name="Berlin S."/>
            <person name="Webster M.T."/>
            <person name="Pourquie O."/>
            <person name="Reymond A."/>
            <person name="Ucla C."/>
            <person name="Antonarakis S.E."/>
            <person name="Long M."/>
            <person name="Emerson J.J."/>
            <person name="Betran E."/>
            <person name="Dupanloup I."/>
            <person name="Kaessmann H."/>
            <person name="Hinrichs A.S."/>
            <person name="Bejerano G."/>
            <person name="Furey T.S."/>
            <person name="Harte R.A."/>
            <person name="Raney B."/>
            <person name="Siepel A."/>
            <person name="Kent W.J."/>
            <person name="Haussler D."/>
            <person name="Eyras E."/>
            <person name="Castelo R."/>
            <person name="Abril J.F."/>
            <person name="Castellano S."/>
            <person name="Camara F."/>
            <person name="Parra G."/>
            <person name="Guigo R."/>
            <person name="Bourque G."/>
            <person name="Tesler G."/>
            <person name="Pevzner P.A."/>
            <person name="Smit A."/>
            <person name="Fulton L.A."/>
            <person name="Mardis E.R."/>
            <person name="Wilson R.K."/>
        </authorList>
    </citation>
    <scope>NUCLEOTIDE SEQUENCE [LARGE SCALE GENOMIC DNA]</scope>
    <source>
        <strain>Red jungle fowl</strain>
    </source>
</reference>
<reference key="3">
    <citation type="journal article" date="2010" name="J. Biol. Chem.">
        <title>Differential regulation of TRPV1, TRPV3, and TRPV4 sensitivity through a conserved binding site on the ankyrin repeat domain.</title>
        <authorList>
            <person name="Phelps C.B."/>
            <person name="Wang R.R."/>
            <person name="Choo S.S."/>
            <person name="Gaudet R."/>
        </authorList>
    </citation>
    <scope>FUNCTION</scope>
    <scope>TRANSPORTER ACTIVITY</scope>
    <scope>SUBCELLULAR LOCATION</scope>
    <scope>INTERACTION WITH CALMODULIN</scope>
    <scope>ATP-BINDING</scope>
    <scope>DOMAIN</scope>
    <scope>ACTIVITY REGULATION</scope>
    <scope>MUTAGENESIS OF LYS-178; LYS-183 AND LYS-205</scope>
</reference>
<reference evidence="17 18" key="4">
    <citation type="journal article" date="2010" name="Nat. Genet.">
        <title>Mutations in TRPV4 cause Charcot-Marie-Tooth disease type 2C.</title>
        <authorList>
            <person name="Landoure G."/>
            <person name="Zdebik A.A."/>
            <person name="Martinez T.L."/>
            <person name="Burnett B.G."/>
            <person name="Stanescu H.C."/>
            <person name="Inada H."/>
            <person name="Shi Y."/>
            <person name="Taye A.A."/>
            <person name="Kong L."/>
            <person name="Munns C.H."/>
            <person name="Choo S.S."/>
            <person name="Phelps C.B."/>
            <person name="Paudel R."/>
            <person name="Houlden H."/>
            <person name="Ludlow C.L."/>
            <person name="Caterina M.J."/>
            <person name="Gaudet R."/>
            <person name="Kleta R."/>
            <person name="Fischbeck K.H."/>
            <person name="Sumner C.J."/>
        </authorList>
    </citation>
    <scope>X-RAY CRYSTALLOGRAPHY (2.30 ANGSTROMS) OF 133-382</scope>
</reference>
<reference evidence="19 20" key="5">
    <citation type="journal article" date="2014" name="Nat. Commun.">
        <title>TRPV4 channel activity is modulated by direct interaction of the ankyrin domain to PI(4,5)P.</title>
        <authorList>
            <person name="Takahashi N."/>
            <person name="Hamada-Nakahara S."/>
            <person name="Itoh Y."/>
            <person name="Takemura K."/>
            <person name="Shimada A."/>
            <person name="Ueda Y."/>
            <person name="Kitamata M."/>
            <person name="Matsuoka R."/>
            <person name="Hanawa-Suetsugu K."/>
            <person name="Senju Y."/>
            <person name="Mori M.X."/>
            <person name="Kiyonaka S."/>
            <person name="Kohda D."/>
            <person name="Kitao A."/>
            <person name="Mori Y."/>
            <person name="Suetsugu S."/>
        </authorList>
    </citation>
    <scope>X-RAY CRYSTALLOGRAPHY (1.90 ANGSTROMS) OF 133-382 IN COMPLEX WITH MYO-INOSITOL-1,4,5-TRISPHOSPHATE</scope>
    <scope>LIPID-BINDING</scope>
    <scope>DOMAIN</scope>
</reference>
<protein>
    <recommendedName>
        <fullName>Transient receptor potential cation channel subfamily V member 4</fullName>
        <shortName>TrpV4</shortName>
    </recommendedName>
    <alternativeName>
        <fullName evidence="10">Vanilloid receptor-related osmotically activated channel</fullName>
        <shortName evidence="10">VR-OAC</shortName>
    </alternativeName>
</protein>
<accession>A0A1D5PXA5</accession>
<accession>Q9DFS3</accession>
<gene>
    <name type="primary">TRPV4</name>
</gene>